<keyword id="KW-1185">Reference proteome</keyword>
<proteinExistence type="predicted"/>
<organism>
    <name type="scientific">Ictalurid herpesvirus 1 (strain Auburn)</name>
    <name type="common">IcHV-1</name>
    <name type="synonym">Channel catfish herpesvirus</name>
    <dbReference type="NCBI Taxonomy" id="766178"/>
    <lineage>
        <taxon>Viruses</taxon>
        <taxon>Duplodnaviria</taxon>
        <taxon>Heunggongvirae</taxon>
        <taxon>Peploviricota</taxon>
        <taxon>Herviviricetes</taxon>
        <taxon>Herpesvirales</taxon>
        <taxon>Alloherpesviridae</taxon>
        <taxon>Ictavirus</taxon>
        <taxon>Ictavirus ictaluridallo1</taxon>
        <taxon>Ictalurid herpesvirus 1</taxon>
    </lineage>
</organism>
<dbReference type="EMBL" id="M75136">
    <property type="protein sequence ID" value="AAA88157.1"/>
    <property type="molecule type" value="Genomic_DNA"/>
</dbReference>
<dbReference type="PIR" id="A36792">
    <property type="entry name" value="A36792"/>
</dbReference>
<dbReference type="RefSeq" id="NP_041145.1">
    <property type="nucleotide sequence ID" value="NC_001493.2"/>
</dbReference>
<dbReference type="GeneID" id="1488449"/>
<dbReference type="KEGG" id="vg:1488449"/>
<dbReference type="Proteomes" id="UP000007643">
    <property type="component" value="Segment"/>
</dbReference>
<organismHost>
    <name type="scientific">Ictaluridae</name>
    <name type="common">bullhead catfishes</name>
    <dbReference type="NCBI Taxonomy" id="7996"/>
</organismHost>
<accession>Q00158</accession>
<gene>
    <name type="primary">ORF54</name>
</gene>
<reference key="1">
    <citation type="journal article" date="1992" name="Virology">
        <title>Channel catfish virus: a new type of herpesvirus.</title>
        <authorList>
            <person name="Davison A.J."/>
        </authorList>
    </citation>
    <scope>NUCLEOTIDE SEQUENCE [LARGE SCALE GENOMIC DNA]</scope>
</reference>
<name>VG54_ICHVA</name>
<protein>
    <recommendedName>
        <fullName>Uncharacterized protein ORF54</fullName>
    </recommendedName>
</protein>
<sequence>MGIRKKLVQSLLFNSISQNNFGLILQNNLFGKADAVIFDHMLVMHSMCFVPISPGMDAREHIITNTLNFYTRYSKTIATASTLFILCEDGLQSVKPAVRDKRNEHVPTPALVYFKHHKAELAKALVEKMQMEGICTLFITGYNGRSMSYQYMNGTGKRPAVPVELVMDRFVADCKEVEADMMMYAMAAHYSRRYPGHLVVITTRDTDVVPSGLALLADKGPEYLGNTVIEFKTPMFNGLKDHDRAVSDFLHVSNPTNSHKLILNRFAQFTPQRFFKADGFGGGTIEGGLFNLLFDSTNISPFAALIDKFVQTTASLDAEELLGIIRFFIACLRAGFRGTIFRRIFMRYLDDDPSTRETVTKFMGAMDTAADKYALLGDFLSQTNSYIANRTIKQLSPDYDWDIIDDADQSDGLGNCTLGQPYMVTTTSLSNRCIKGLVSLAKMYNEHRLPLDSYGSYIRMQTTHGHCYVRFAPVKASTAAVVACTLAGADYNLTIPKLGSVQIMNLLLNPDFIEMCEKTRFSVEEHGAEFIWKMISMTKLRKKTPVDPGLDGYIDCVWRTLCYTIQTWQLKTPVAGPDYGFNVRDSMVYFVIDDPSAFKNVFTLGRK</sequence>
<feature type="chain" id="PRO_0000222134" description="Uncharacterized protein ORF54">
    <location>
        <begin position="1"/>
        <end position="607"/>
    </location>
</feature>